<dbReference type="EC" id="3.4.24.-"/>
<dbReference type="EMBL" id="AE007869">
    <property type="protein sequence ID" value="AAK87172.2"/>
    <property type="molecule type" value="Genomic_DNA"/>
</dbReference>
<dbReference type="PIR" id="AD2746">
    <property type="entry name" value="AD2746"/>
</dbReference>
<dbReference type="PIR" id="C97527">
    <property type="entry name" value="C97527"/>
</dbReference>
<dbReference type="RefSeq" id="NP_354387.2">
    <property type="nucleotide sequence ID" value="NC_003062.2"/>
</dbReference>
<dbReference type="SMR" id="Q8UFL7"/>
<dbReference type="STRING" id="176299.Atu1380"/>
<dbReference type="EnsemblBacteria" id="AAK87172">
    <property type="protein sequence ID" value="AAK87172"/>
    <property type="gene ID" value="Atu1380"/>
</dbReference>
<dbReference type="KEGG" id="atu:Atu1380"/>
<dbReference type="PATRIC" id="fig|176299.10.peg.1403"/>
<dbReference type="eggNOG" id="COG0750">
    <property type="taxonomic scope" value="Bacteria"/>
</dbReference>
<dbReference type="HOGENOM" id="CLU_025778_1_0_5"/>
<dbReference type="OrthoDB" id="9782003at2"/>
<dbReference type="PhylomeDB" id="Q8UFL7"/>
<dbReference type="BioCyc" id="AGRO:ATU1380-MONOMER"/>
<dbReference type="Proteomes" id="UP000000813">
    <property type="component" value="Chromosome circular"/>
</dbReference>
<dbReference type="GO" id="GO:0005886">
    <property type="term" value="C:plasma membrane"/>
    <property type="evidence" value="ECO:0007669"/>
    <property type="project" value="UniProtKB-SubCell"/>
</dbReference>
<dbReference type="GO" id="GO:0046872">
    <property type="term" value="F:metal ion binding"/>
    <property type="evidence" value="ECO:0007669"/>
    <property type="project" value="UniProtKB-KW"/>
</dbReference>
<dbReference type="GO" id="GO:0004222">
    <property type="term" value="F:metalloendopeptidase activity"/>
    <property type="evidence" value="ECO:0007669"/>
    <property type="project" value="InterPro"/>
</dbReference>
<dbReference type="GO" id="GO:0006508">
    <property type="term" value="P:proteolysis"/>
    <property type="evidence" value="ECO:0007669"/>
    <property type="project" value="UniProtKB-KW"/>
</dbReference>
<dbReference type="CDD" id="cd23081">
    <property type="entry name" value="cpPDZ_EcRseP-like"/>
    <property type="match status" value="1"/>
</dbReference>
<dbReference type="CDD" id="cd06163">
    <property type="entry name" value="S2P-M50_PDZ_RseP-like"/>
    <property type="match status" value="1"/>
</dbReference>
<dbReference type="Gene3D" id="2.30.42.10">
    <property type="match status" value="1"/>
</dbReference>
<dbReference type="InterPro" id="IPR001478">
    <property type="entry name" value="PDZ"/>
</dbReference>
<dbReference type="InterPro" id="IPR041489">
    <property type="entry name" value="PDZ_6"/>
</dbReference>
<dbReference type="InterPro" id="IPR036034">
    <property type="entry name" value="PDZ_sf"/>
</dbReference>
<dbReference type="InterPro" id="IPR004387">
    <property type="entry name" value="Pept_M50_Zn"/>
</dbReference>
<dbReference type="InterPro" id="IPR008915">
    <property type="entry name" value="Peptidase_M50"/>
</dbReference>
<dbReference type="NCBIfam" id="TIGR00054">
    <property type="entry name" value="RIP metalloprotease RseP"/>
    <property type="match status" value="1"/>
</dbReference>
<dbReference type="PANTHER" id="PTHR42837:SF2">
    <property type="entry name" value="MEMBRANE METALLOPROTEASE ARASP2, CHLOROPLASTIC-RELATED"/>
    <property type="match status" value="1"/>
</dbReference>
<dbReference type="PANTHER" id="PTHR42837">
    <property type="entry name" value="REGULATOR OF SIGMA-E PROTEASE RSEP"/>
    <property type="match status" value="1"/>
</dbReference>
<dbReference type="Pfam" id="PF17820">
    <property type="entry name" value="PDZ_6"/>
    <property type="match status" value="1"/>
</dbReference>
<dbReference type="Pfam" id="PF02163">
    <property type="entry name" value="Peptidase_M50"/>
    <property type="match status" value="1"/>
</dbReference>
<dbReference type="SMART" id="SM00228">
    <property type="entry name" value="PDZ"/>
    <property type="match status" value="1"/>
</dbReference>
<dbReference type="SUPFAM" id="SSF50156">
    <property type="entry name" value="PDZ domain-like"/>
    <property type="match status" value="1"/>
</dbReference>
<dbReference type="PROSITE" id="PS50106">
    <property type="entry name" value="PDZ"/>
    <property type="match status" value="1"/>
</dbReference>
<dbReference type="PROSITE" id="PS00142">
    <property type="entry name" value="ZINC_PROTEASE"/>
    <property type="match status" value="1"/>
</dbReference>
<gene>
    <name type="ordered locus">Atu1380</name>
    <name type="ORF">AGR_C_2553</name>
</gene>
<reference key="1">
    <citation type="journal article" date="2001" name="Science">
        <title>The genome of the natural genetic engineer Agrobacterium tumefaciens C58.</title>
        <authorList>
            <person name="Wood D.W."/>
            <person name="Setubal J.C."/>
            <person name="Kaul R."/>
            <person name="Monks D.E."/>
            <person name="Kitajima J.P."/>
            <person name="Okura V.K."/>
            <person name="Zhou Y."/>
            <person name="Chen L."/>
            <person name="Wood G.E."/>
            <person name="Almeida N.F. Jr."/>
            <person name="Woo L."/>
            <person name="Chen Y."/>
            <person name="Paulsen I.T."/>
            <person name="Eisen J.A."/>
            <person name="Karp P.D."/>
            <person name="Bovee D. Sr."/>
            <person name="Chapman P."/>
            <person name="Clendenning J."/>
            <person name="Deatherage G."/>
            <person name="Gillet W."/>
            <person name="Grant C."/>
            <person name="Kutyavin T."/>
            <person name="Levy R."/>
            <person name="Li M.-J."/>
            <person name="McClelland E."/>
            <person name="Palmieri A."/>
            <person name="Raymond C."/>
            <person name="Rouse G."/>
            <person name="Saenphimmachak C."/>
            <person name="Wu Z."/>
            <person name="Romero P."/>
            <person name="Gordon D."/>
            <person name="Zhang S."/>
            <person name="Yoo H."/>
            <person name="Tao Y."/>
            <person name="Biddle P."/>
            <person name="Jung M."/>
            <person name="Krespan W."/>
            <person name="Perry M."/>
            <person name="Gordon-Kamm B."/>
            <person name="Liao L."/>
            <person name="Kim S."/>
            <person name="Hendrick C."/>
            <person name="Zhao Z.-Y."/>
            <person name="Dolan M."/>
            <person name="Chumley F."/>
            <person name="Tingey S.V."/>
            <person name="Tomb J.-F."/>
            <person name="Gordon M.P."/>
            <person name="Olson M.V."/>
            <person name="Nester E.W."/>
        </authorList>
    </citation>
    <scope>NUCLEOTIDE SEQUENCE [LARGE SCALE GENOMIC DNA]</scope>
    <source>
        <strain>C58 / ATCC 33970</strain>
    </source>
</reference>
<reference key="2">
    <citation type="journal article" date="2001" name="Science">
        <title>Genome sequence of the plant pathogen and biotechnology agent Agrobacterium tumefaciens C58.</title>
        <authorList>
            <person name="Goodner B."/>
            <person name="Hinkle G."/>
            <person name="Gattung S."/>
            <person name="Miller N."/>
            <person name="Blanchard M."/>
            <person name="Qurollo B."/>
            <person name="Goldman B.S."/>
            <person name="Cao Y."/>
            <person name="Askenazi M."/>
            <person name="Halling C."/>
            <person name="Mullin L."/>
            <person name="Houmiel K."/>
            <person name="Gordon J."/>
            <person name="Vaudin M."/>
            <person name="Iartchouk O."/>
            <person name="Epp A."/>
            <person name="Liu F."/>
            <person name="Wollam C."/>
            <person name="Allinger M."/>
            <person name="Doughty D."/>
            <person name="Scott C."/>
            <person name="Lappas C."/>
            <person name="Markelz B."/>
            <person name="Flanagan C."/>
            <person name="Crowell C."/>
            <person name="Gurson J."/>
            <person name="Lomo C."/>
            <person name="Sear C."/>
            <person name="Strub G."/>
            <person name="Cielo C."/>
            <person name="Slater S."/>
        </authorList>
    </citation>
    <scope>NUCLEOTIDE SEQUENCE [LARGE SCALE GENOMIC DNA]</scope>
    <source>
        <strain>C58 / ATCC 33970</strain>
    </source>
</reference>
<comment type="cofactor">
    <cofactor evidence="5">
        <name>Zn(2+)</name>
        <dbReference type="ChEBI" id="CHEBI:29105"/>
    </cofactor>
</comment>
<comment type="subcellular location">
    <subcellularLocation>
        <location evidence="1">Cell inner membrane</location>
        <topology evidence="1">Multi-pass membrane protein</topology>
    </subcellularLocation>
</comment>
<comment type="similarity">
    <text evidence="5">Belongs to the peptidase M50B family.</text>
</comment>
<proteinExistence type="inferred from homology"/>
<protein>
    <recommendedName>
        <fullName>Putative zinc metalloprotease Atu1380</fullName>
        <ecNumber>3.4.24.-</ecNumber>
    </recommendedName>
</protein>
<accession>Q8UFL7</accession>
<evidence type="ECO:0000250" key="1"/>
<evidence type="ECO:0000255" key="2"/>
<evidence type="ECO:0000255" key="3">
    <source>
        <dbReference type="PROSITE-ProRule" id="PRU00143"/>
    </source>
</evidence>
<evidence type="ECO:0000255" key="4">
    <source>
        <dbReference type="PROSITE-ProRule" id="PRU10095"/>
    </source>
</evidence>
<evidence type="ECO:0000305" key="5"/>
<name>Y1380_AGRFC</name>
<sequence>MNTIMAATGFLTGYIVPFILVLSLLVFVHEMGHYLVGRWCGIRSTAFSIGFGPELIGFTDKRGTRWKLSAIPLGGYVKFFGDEDAASKSDSSGLSHMSLEERAQTLSGAKLWKRAATVAAGPIANFILAILIFAVLFGIYGRMIADPVVAEVRENSAAATAGVKPGDRLVAIDGEKVMTFEDVRRYVGIRPGTPITVTVERAGEELKLPMVPTRTETTDQFGNKLEMGIIGIVTDQTSGNFRHIEYSPSEAVAEGVRETGHVITGTFNYIGNLVTGRMNADQLGGPVRVAQASGQMATLGISAVIQLAAVLSVSIGLLNLMPVPVLDGGHLVFYAIEAIRGRPLGAGAQEVAFRIGMMMILGLMVFATWNDISSLIG</sequence>
<organism>
    <name type="scientific">Agrobacterium fabrum (strain C58 / ATCC 33970)</name>
    <name type="common">Agrobacterium tumefaciens (strain C58)</name>
    <dbReference type="NCBI Taxonomy" id="176299"/>
    <lineage>
        <taxon>Bacteria</taxon>
        <taxon>Pseudomonadati</taxon>
        <taxon>Pseudomonadota</taxon>
        <taxon>Alphaproteobacteria</taxon>
        <taxon>Hyphomicrobiales</taxon>
        <taxon>Rhizobiaceae</taxon>
        <taxon>Rhizobium/Agrobacterium group</taxon>
        <taxon>Agrobacterium</taxon>
        <taxon>Agrobacterium tumefaciens complex</taxon>
    </lineage>
</organism>
<feature type="chain" id="PRO_0000088425" description="Putative zinc metalloprotease Atu1380">
    <location>
        <begin position="1"/>
        <end position="377"/>
    </location>
</feature>
<feature type="transmembrane region" description="Helical" evidence="2">
    <location>
        <begin position="118"/>
        <end position="140"/>
    </location>
</feature>
<feature type="transmembrane region" description="Helical" evidence="2">
    <location>
        <begin position="299"/>
        <end position="321"/>
    </location>
</feature>
<feature type="transmembrane region" description="Helical" evidence="2">
    <location>
        <begin position="351"/>
        <end position="373"/>
    </location>
</feature>
<feature type="domain" description="PDZ" evidence="3">
    <location>
        <begin position="129"/>
        <end position="202"/>
    </location>
</feature>
<feature type="active site" evidence="4">
    <location>
        <position position="30"/>
    </location>
</feature>
<feature type="binding site" evidence="4">
    <location>
        <position position="29"/>
    </location>
    <ligand>
        <name>Zn(2+)</name>
        <dbReference type="ChEBI" id="CHEBI:29105"/>
        <note>catalytic</note>
    </ligand>
</feature>
<feature type="binding site" evidence="4">
    <location>
        <position position="33"/>
    </location>
    <ligand>
        <name>Zn(2+)</name>
        <dbReference type="ChEBI" id="CHEBI:29105"/>
        <note>catalytic</note>
    </ligand>
</feature>
<keyword id="KW-0997">Cell inner membrane</keyword>
<keyword id="KW-1003">Cell membrane</keyword>
<keyword id="KW-0378">Hydrolase</keyword>
<keyword id="KW-0472">Membrane</keyword>
<keyword id="KW-0479">Metal-binding</keyword>
<keyword id="KW-0482">Metalloprotease</keyword>
<keyword id="KW-0645">Protease</keyword>
<keyword id="KW-1185">Reference proteome</keyword>
<keyword id="KW-0812">Transmembrane</keyword>
<keyword id="KW-1133">Transmembrane helix</keyword>
<keyword id="KW-0862">Zinc</keyword>